<reference key="1">
    <citation type="journal article" date="1998" name="Science">
        <title>Genome sequence of the nematode C. elegans: a platform for investigating biology.</title>
        <authorList>
            <consortium name="The C. elegans sequencing consortium"/>
        </authorList>
    </citation>
    <scope>NUCLEOTIDE SEQUENCE [LARGE SCALE GENOMIC DNA]</scope>
    <source>
        <strain>Bristol N2</strain>
    </source>
</reference>
<protein>
    <recommendedName>
        <fullName evidence="2">Large ribosomal subunit protein uL2</fullName>
    </recommendedName>
    <alternativeName>
        <fullName>60S ribosomal protein L8</fullName>
    </alternativeName>
</protein>
<dbReference type="EMBL" id="Z81453">
    <property type="protein sequence ID" value="CAB03792.1"/>
    <property type="molecule type" value="Genomic_DNA"/>
</dbReference>
<dbReference type="PIR" id="T18676">
    <property type="entry name" value="T18676"/>
</dbReference>
<dbReference type="RefSeq" id="NP_507940.1">
    <property type="nucleotide sequence ID" value="NM_075539.5"/>
</dbReference>
<dbReference type="PDB" id="9BH5">
    <property type="method" value="EM"/>
    <property type="resolution" value="2.63 A"/>
    <property type="chains" value="CA=1-260"/>
</dbReference>
<dbReference type="PDB" id="9CAI">
    <property type="method" value="EM"/>
    <property type="resolution" value="2.59 A"/>
    <property type="chains" value="CA=1-260"/>
</dbReference>
<dbReference type="PDBsum" id="9BH5"/>
<dbReference type="PDBsum" id="9CAI"/>
<dbReference type="EMDB" id="EMD-44533"/>
<dbReference type="EMDB" id="EMD-45392"/>
<dbReference type="SMR" id="Q9XVF7"/>
<dbReference type="BioGRID" id="45300">
    <property type="interactions" value="100"/>
</dbReference>
<dbReference type="DIP" id="DIP-24785N"/>
<dbReference type="FunCoup" id="Q9XVF7">
    <property type="interactions" value="1657"/>
</dbReference>
<dbReference type="IntAct" id="Q9XVF7">
    <property type="interactions" value="2"/>
</dbReference>
<dbReference type="STRING" id="6239.B0250.1.1"/>
<dbReference type="PaxDb" id="6239-B0250.1"/>
<dbReference type="PeptideAtlas" id="Q9XVF7"/>
<dbReference type="EnsemblMetazoa" id="B0250.1.1">
    <property type="protein sequence ID" value="B0250.1.1"/>
    <property type="gene ID" value="WBGene00004413"/>
</dbReference>
<dbReference type="GeneID" id="180343"/>
<dbReference type="KEGG" id="cel:CELE_B0250.1"/>
<dbReference type="UCSC" id="B0250.1.1">
    <property type="organism name" value="c. elegans"/>
</dbReference>
<dbReference type="AGR" id="WB:WBGene00004413"/>
<dbReference type="CTD" id="180343"/>
<dbReference type="WormBase" id="B0250.1">
    <property type="protein sequence ID" value="CE18478"/>
    <property type="gene ID" value="WBGene00004413"/>
    <property type="gene designation" value="rpl-8"/>
</dbReference>
<dbReference type="eggNOG" id="KOG2309">
    <property type="taxonomic scope" value="Eukaryota"/>
</dbReference>
<dbReference type="GeneTree" id="ENSGT00940000153244"/>
<dbReference type="HOGENOM" id="CLU_036235_0_3_1"/>
<dbReference type="InParanoid" id="Q9XVF7"/>
<dbReference type="OMA" id="GGRHPCT"/>
<dbReference type="OrthoDB" id="10267824at2759"/>
<dbReference type="PhylomeDB" id="Q9XVF7"/>
<dbReference type="Reactome" id="R-CEL-156827">
    <property type="pathway name" value="L13a-mediated translational silencing of Ceruloplasmin expression"/>
</dbReference>
<dbReference type="Reactome" id="R-CEL-1799339">
    <property type="pathway name" value="SRP-dependent cotranslational protein targeting to membrane"/>
</dbReference>
<dbReference type="Reactome" id="R-CEL-72689">
    <property type="pathway name" value="Formation of a pool of free 40S subunits"/>
</dbReference>
<dbReference type="Reactome" id="R-CEL-72706">
    <property type="pathway name" value="GTP hydrolysis and joining of the 60S ribosomal subunit"/>
</dbReference>
<dbReference type="Reactome" id="R-CEL-9629569">
    <property type="pathway name" value="Protein hydroxylation"/>
</dbReference>
<dbReference type="Reactome" id="R-CEL-975956">
    <property type="pathway name" value="Nonsense Mediated Decay (NMD) independent of the Exon Junction Complex (EJC)"/>
</dbReference>
<dbReference type="Reactome" id="R-CEL-975957">
    <property type="pathway name" value="Nonsense Mediated Decay (NMD) enhanced by the Exon Junction Complex (EJC)"/>
</dbReference>
<dbReference type="PRO" id="PR:Q9XVF7"/>
<dbReference type="Proteomes" id="UP000001940">
    <property type="component" value="Chromosome V"/>
</dbReference>
<dbReference type="Bgee" id="WBGene00004413">
    <property type="expression patterns" value="Expressed in larva and 3 other cell types or tissues"/>
</dbReference>
<dbReference type="GO" id="GO:0022625">
    <property type="term" value="C:cytosolic large ribosomal subunit"/>
    <property type="evidence" value="ECO:0000318"/>
    <property type="project" value="GO_Central"/>
</dbReference>
<dbReference type="GO" id="GO:0003723">
    <property type="term" value="F:RNA binding"/>
    <property type="evidence" value="ECO:0000318"/>
    <property type="project" value="GO_Central"/>
</dbReference>
<dbReference type="GO" id="GO:0019843">
    <property type="term" value="F:rRNA binding"/>
    <property type="evidence" value="ECO:0007669"/>
    <property type="project" value="UniProtKB-KW"/>
</dbReference>
<dbReference type="GO" id="GO:0003735">
    <property type="term" value="F:structural constituent of ribosome"/>
    <property type="evidence" value="ECO:0000318"/>
    <property type="project" value="GO_Central"/>
</dbReference>
<dbReference type="GO" id="GO:0002181">
    <property type="term" value="P:cytoplasmic translation"/>
    <property type="evidence" value="ECO:0000318"/>
    <property type="project" value="GO_Central"/>
</dbReference>
<dbReference type="FunFam" id="2.40.50.140:FF:000020">
    <property type="entry name" value="60S ribosomal protein L2"/>
    <property type="match status" value="1"/>
</dbReference>
<dbReference type="FunFam" id="4.10.950.10:FF:000002">
    <property type="entry name" value="60S ribosomal protein L2"/>
    <property type="match status" value="1"/>
</dbReference>
<dbReference type="FunFam" id="2.30.30.30:FF:000006">
    <property type="entry name" value="60S ribosomal protein L8"/>
    <property type="match status" value="1"/>
</dbReference>
<dbReference type="Gene3D" id="2.30.30.30">
    <property type="match status" value="1"/>
</dbReference>
<dbReference type="Gene3D" id="2.40.50.140">
    <property type="entry name" value="Nucleic acid-binding proteins"/>
    <property type="match status" value="1"/>
</dbReference>
<dbReference type="Gene3D" id="4.10.950.10">
    <property type="entry name" value="Ribosomal protein L2, domain 3"/>
    <property type="match status" value="1"/>
</dbReference>
<dbReference type="InterPro" id="IPR012340">
    <property type="entry name" value="NA-bd_OB-fold"/>
</dbReference>
<dbReference type="InterPro" id="IPR014722">
    <property type="entry name" value="Rib_uL2_dom2"/>
</dbReference>
<dbReference type="InterPro" id="IPR002171">
    <property type="entry name" value="Ribosomal_uL2"/>
</dbReference>
<dbReference type="InterPro" id="IPR023672">
    <property type="entry name" value="Ribosomal_uL2_arc_euk"/>
</dbReference>
<dbReference type="InterPro" id="IPR022669">
    <property type="entry name" value="Ribosomal_uL2_C"/>
</dbReference>
<dbReference type="InterPro" id="IPR022671">
    <property type="entry name" value="Ribosomal_uL2_CS"/>
</dbReference>
<dbReference type="InterPro" id="IPR014726">
    <property type="entry name" value="Ribosomal_uL2_dom3"/>
</dbReference>
<dbReference type="InterPro" id="IPR022666">
    <property type="entry name" value="Ribosomal_uL2_RNA-bd_dom"/>
</dbReference>
<dbReference type="InterPro" id="IPR008991">
    <property type="entry name" value="Translation_prot_SH3-like_sf"/>
</dbReference>
<dbReference type="NCBIfam" id="NF007180">
    <property type="entry name" value="PRK09612.1"/>
    <property type="match status" value="1"/>
</dbReference>
<dbReference type="PANTHER" id="PTHR13691:SF16">
    <property type="entry name" value="LARGE RIBOSOMAL SUBUNIT PROTEIN UL2"/>
    <property type="match status" value="1"/>
</dbReference>
<dbReference type="PANTHER" id="PTHR13691">
    <property type="entry name" value="RIBOSOMAL PROTEIN L2"/>
    <property type="match status" value="1"/>
</dbReference>
<dbReference type="Pfam" id="PF00181">
    <property type="entry name" value="Ribosomal_L2"/>
    <property type="match status" value="1"/>
</dbReference>
<dbReference type="Pfam" id="PF03947">
    <property type="entry name" value="Ribosomal_L2_C"/>
    <property type="match status" value="1"/>
</dbReference>
<dbReference type="PIRSF" id="PIRSF002158">
    <property type="entry name" value="Ribosomal_L2"/>
    <property type="match status" value="1"/>
</dbReference>
<dbReference type="SMART" id="SM01383">
    <property type="entry name" value="Ribosomal_L2"/>
    <property type="match status" value="1"/>
</dbReference>
<dbReference type="SMART" id="SM01382">
    <property type="entry name" value="Ribosomal_L2_C"/>
    <property type="match status" value="1"/>
</dbReference>
<dbReference type="SUPFAM" id="SSF50249">
    <property type="entry name" value="Nucleic acid-binding proteins"/>
    <property type="match status" value="1"/>
</dbReference>
<dbReference type="SUPFAM" id="SSF50104">
    <property type="entry name" value="Translation proteins SH3-like domain"/>
    <property type="match status" value="1"/>
</dbReference>
<dbReference type="PROSITE" id="PS00467">
    <property type="entry name" value="RIBOSOMAL_L2"/>
    <property type="match status" value="1"/>
</dbReference>
<gene>
    <name evidence="3" type="primary">rpl-8</name>
    <name evidence="3" type="synonym">rpl-2</name>
    <name evidence="3" type="ORF">B0250.1</name>
</gene>
<proteinExistence type="evidence at protein level"/>
<accession>Q9XVF7</accession>
<evidence type="ECO:0000256" key="1">
    <source>
        <dbReference type="SAM" id="MobiDB-lite"/>
    </source>
</evidence>
<evidence type="ECO:0000305" key="2"/>
<evidence type="ECO:0000312" key="3">
    <source>
        <dbReference type="WormBase" id="B0250.1"/>
    </source>
</evidence>
<comment type="subcellular location">
    <subcellularLocation>
        <location>Cytoplasm</location>
    </subcellularLocation>
</comment>
<comment type="similarity">
    <text evidence="2">Belongs to the universal ribosomal protein uL2 family.</text>
</comment>
<sequence length="260" mass="28204">MGRRIRIQRKGAGGIFKSHNKHRKGASKLRPLDYAERHGYIKGLVKDIIHDPGRGAPLAIIAFRDPYKYKTVKTTVVAAEGMHTGQFIHCGAKAQIQIGNIVPVGTLPEGTTICNVENKSGDRGVIARASGNYATVIAHNPDTKKTRIRLPSGAKKVVQSVNRAMIGLVAGGGRTDKPLLKAGRSYHKYKAKRNSWPRVRGVAMNPVEHPHGGGNHQHIGHPSTVRRDASAGKKVGLIAARRTGRIRGGKPVKFTKEENV</sequence>
<name>RL8_CAEEL</name>
<keyword id="KW-0002">3D-structure</keyword>
<keyword id="KW-0963">Cytoplasm</keyword>
<keyword id="KW-1185">Reference proteome</keyword>
<keyword id="KW-0687">Ribonucleoprotein</keyword>
<keyword id="KW-0689">Ribosomal protein</keyword>
<keyword id="KW-0694">RNA-binding</keyword>
<keyword id="KW-0699">rRNA-binding</keyword>
<feature type="chain" id="PRO_0000129751" description="Large ribosomal subunit protein uL2">
    <location>
        <begin position="1"/>
        <end position="260"/>
    </location>
</feature>
<feature type="region of interest" description="Disordered" evidence="1">
    <location>
        <begin position="208"/>
        <end position="230"/>
    </location>
</feature>
<organism>
    <name type="scientific">Caenorhabditis elegans</name>
    <dbReference type="NCBI Taxonomy" id="6239"/>
    <lineage>
        <taxon>Eukaryota</taxon>
        <taxon>Metazoa</taxon>
        <taxon>Ecdysozoa</taxon>
        <taxon>Nematoda</taxon>
        <taxon>Chromadorea</taxon>
        <taxon>Rhabditida</taxon>
        <taxon>Rhabditina</taxon>
        <taxon>Rhabditomorpha</taxon>
        <taxon>Rhabditoidea</taxon>
        <taxon>Rhabditidae</taxon>
        <taxon>Peloderinae</taxon>
        <taxon>Caenorhabditis</taxon>
    </lineage>
</organism>